<feature type="signal peptide" evidence="2">
    <location>
        <begin position="1"/>
        <end position="23"/>
    </location>
</feature>
<feature type="chain" id="PRO_5000409175" description="Vacuolar protein sorting/targeting protein 10">
    <location>
        <begin position="24"/>
        <end position="1489"/>
    </location>
</feature>
<feature type="topological domain" description="Lumenal" evidence="2">
    <location>
        <begin position="24"/>
        <end position="1362"/>
    </location>
</feature>
<feature type="transmembrane region" description="Helical" evidence="2">
    <location>
        <begin position="1363"/>
        <end position="1383"/>
    </location>
</feature>
<feature type="topological domain" description="Cytoplasmic" evidence="2">
    <location>
        <begin position="1384"/>
        <end position="1410"/>
    </location>
</feature>
<feature type="transmembrane region" description="Helical" evidence="2">
    <location>
        <begin position="1411"/>
        <end position="1431"/>
    </location>
</feature>
<feature type="topological domain" description="Lumenal" evidence="2">
    <location>
        <begin position="1432"/>
        <end position="1489"/>
    </location>
</feature>
<feature type="repeat" description="BNR 1">
    <location>
        <begin position="63"/>
        <end position="72"/>
    </location>
</feature>
<feature type="repeat" description="BNR 2">
    <location>
        <begin position="387"/>
        <end position="396"/>
    </location>
</feature>
<feature type="repeat" description="BNR 3">
    <location>
        <begin position="454"/>
        <end position="464"/>
    </location>
</feature>
<feature type="repeat" description="BNR 4">
    <location>
        <begin position="495"/>
        <end position="505"/>
    </location>
</feature>
<feature type="repeat" description="BNR 5">
    <location>
        <begin position="738"/>
        <end position="747"/>
    </location>
</feature>
<feature type="repeat" description="BNR 6">
    <location>
        <begin position="1118"/>
        <end position="1128"/>
    </location>
</feature>
<feature type="repeat" description="BNR 7">
    <location>
        <begin position="1160"/>
        <end position="1169"/>
    </location>
</feature>
<feature type="glycosylation site" description="N-linked (GlcNAc...) asparagine" evidence="2">
    <location>
        <position position="306"/>
    </location>
</feature>
<feature type="glycosylation site" description="N-linked (GlcNAc...) asparagine" evidence="2">
    <location>
        <position position="331"/>
    </location>
</feature>
<feature type="glycosylation site" description="N-linked (GlcNAc...) asparagine" evidence="2">
    <location>
        <position position="684"/>
    </location>
</feature>
<feature type="glycosylation site" description="N-linked (GlcNAc...) asparagine" evidence="2">
    <location>
        <position position="862"/>
    </location>
</feature>
<feature type="glycosylation site" description="N-linked (GlcNAc...) asparagine" evidence="2">
    <location>
        <position position="925"/>
    </location>
</feature>
<feature type="glycosylation site" description="N-linked (GlcNAc...) asparagine" evidence="2">
    <location>
        <position position="982"/>
    </location>
</feature>
<feature type="glycosylation site" description="N-linked (GlcNAc...) asparagine" evidence="2">
    <location>
        <position position="1272"/>
    </location>
</feature>
<accession>B6H711</accession>
<name>VPS10_PENRW</name>
<sequence length="1489" mass="167525">MIPRWLLLTLSLLLVWASHPAAAKGNEPNIVTHELDAPPADLFYFHGTNTILYRDRRSLTAHVSFDGGEEWETVKGNDGTIEGTVDLIWRHPFDDNRAYILGENGKHWITTDQAKSWRPFQVDVLPFASMRSFPLEFNGWDPKKVIFMGLDCTILGCLPQTFYTTDDFETVKPLREMTLQCMWAASRPQFALDIDMPKSTGDRILCVVPGLKGPFEHTRTERLIYSDSFFKDDAEGTEAKLDHGKPLSGVSLQIRSVSKYIVARLQSRGTQEQALYVSDDSNVWHRAEFGKHRIEEDAYTILESTNYSIQIDVQTTWQDNRMGSLFSSNSNGTYFTQNIEHTNEDLNGLVDFERVTGIHGITIVNTVKNWEEAKKSDSNKKKLISSISFDDGRTFQPLKADKDELHLHSMTTYAALHEMPLPDHRMFSSPAPGLVMGVGNTGGHLEDYSKGDLYVSDNAGLTWRRALKGPHRYEFGDQGGVITAVLDSSQTDKVQFSIDHGKEWESISLGQKIRPLFLVSTPDSTSLKFLLVGTSSDDTTKTLMFFIDFDGLHERECGSGDLEEWTARLNEKGEPDCLMGQKQFFQRRKANADCFIKKEFAISGPEFQLCKCSAEDFECDYNFVRSEDRKECVPAVPLTPPAGKCKDPSDKYMGPSGWRLIPGNACIREGGEDLEREIERSCSNVTGPPLITDGKPRAGKPQTISAKWTNYFYLERQASNNGVDETIMMLTDKYELHVSRDHGRNWKQIHPDEKFIEMVQHPYFSDTAFFLTDGKRVYYTINHGDSFHFFDAPSVPNKEYIRKLAFHEKFQDSLIWIGHKDCEGKNCRSQAYVTDKRGASWEPMLIGIADGGCNFGYQEGRNNSEKLVICEQYKDEEKNNNRQLVISDDYFSTMEVKFENIARSATKNGFEVVAWYEGDQKEYLNASVSVDGRTYANAHFPFNIKVPQYTVLPSSPHALFLLVMVNGGGERSFGSLVKSNSNGTYFVQSLEGLNVNDRGYTDYDELQGLEGVAIANVVSNREEVLNKGAAKKLRTMITHNDGGQWMLLAPPSKDVDGKNFDCSVTEGKGTEKCALHFHGYTERRDYRDTLYSGSAIGLMLALGNVGEHLTSASEADTYLTRDGGISWTQVKKGQYMWEFGAAGSVIVLVSDRKATKVVHYTLDEGMSWHEFQFAEKELVIDDISTVPSDTSKKFLLWGIDGGKRVIVTLDFSGIWSRDCNDDESDYYNWAPTHPFQEENCIFGHVEEYHRKKPAAECWNAWREPHIHSIGRNCTCTRADFECDYNYEIQTDGSCGLVPGLQPQDHVAQCSQDPDKVEYWEPTGYRRIPQTTCEGGLLLDQDVSKPCPNKEEEYQKKHGISGTGLFFAIVTPIAVAVAVGWYAYTHWDGKFGQIRLGDSGGSQSWLSRDSMLVAVPVALIAGIVAVAQSLPLLVKSLARSSSGLFGRRGMQRPYATRGSFAARRGDYSSVVDDEDELLGADDFDDEEDQA</sequence>
<gene>
    <name type="primary">vps10</name>
    <name type="ORF">Pc16g01030</name>
</gene>
<keyword id="KW-0325">Glycoprotein</keyword>
<keyword id="KW-0333">Golgi apparatus</keyword>
<keyword id="KW-0472">Membrane</keyword>
<keyword id="KW-0653">Protein transport</keyword>
<keyword id="KW-0675">Receptor</keyword>
<keyword id="KW-1185">Reference proteome</keyword>
<keyword id="KW-0677">Repeat</keyword>
<keyword id="KW-0732">Signal</keyword>
<keyword id="KW-0812">Transmembrane</keyword>
<keyword id="KW-1133">Transmembrane helix</keyword>
<keyword id="KW-0813">Transport</keyword>
<dbReference type="EMBL" id="AM920431">
    <property type="protein sequence ID" value="CAP92773.1"/>
    <property type="molecule type" value="Genomic_DNA"/>
</dbReference>
<dbReference type="RefSeq" id="XP_002560521.1">
    <property type="nucleotide sequence ID" value="XM_002560475.1"/>
</dbReference>
<dbReference type="SMR" id="B6H711"/>
<dbReference type="STRING" id="500485.B6H711"/>
<dbReference type="GlyCosmos" id="B6H711">
    <property type="glycosylation" value="7 sites, No reported glycans"/>
</dbReference>
<dbReference type="GeneID" id="8315370"/>
<dbReference type="KEGG" id="pcs:N7525_011530"/>
<dbReference type="VEuPathDB" id="FungiDB:PCH_Pc16g01030"/>
<dbReference type="eggNOG" id="KOG3511">
    <property type="taxonomic scope" value="Eukaryota"/>
</dbReference>
<dbReference type="HOGENOM" id="CLU_000700_0_0_1"/>
<dbReference type="OMA" id="ATMSEFI"/>
<dbReference type="OrthoDB" id="443634at2759"/>
<dbReference type="BioCyc" id="PCHR:PC16G01030-MONOMER"/>
<dbReference type="Proteomes" id="UP000000724">
    <property type="component" value="Contig Pc00c16"/>
</dbReference>
<dbReference type="GO" id="GO:0005829">
    <property type="term" value="C:cytosol"/>
    <property type="evidence" value="ECO:0007669"/>
    <property type="project" value="GOC"/>
</dbReference>
<dbReference type="GO" id="GO:0005794">
    <property type="term" value="C:Golgi apparatus"/>
    <property type="evidence" value="ECO:0007669"/>
    <property type="project" value="UniProtKB-SubCell"/>
</dbReference>
<dbReference type="GO" id="GO:0016020">
    <property type="term" value="C:membrane"/>
    <property type="evidence" value="ECO:0007669"/>
    <property type="project" value="UniProtKB-KW"/>
</dbReference>
<dbReference type="GO" id="GO:0006895">
    <property type="term" value="P:Golgi to endosome transport"/>
    <property type="evidence" value="ECO:0007669"/>
    <property type="project" value="TreeGrafter"/>
</dbReference>
<dbReference type="GO" id="GO:0006896">
    <property type="term" value="P:Golgi to vacuole transport"/>
    <property type="evidence" value="ECO:0007669"/>
    <property type="project" value="TreeGrafter"/>
</dbReference>
<dbReference type="GO" id="GO:0006623">
    <property type="term" value="P:protein targeting to vacuole"/>
    <property type="evidence" value="ECO:0007669"/>
    <property type="project" value="TreeGrafter"/>
</dbReference>
<dbReference type="FunFam" id="3.30.60.270:FF:000005">
    <property type="entry name" value="Sortilin"/>
    <property type="match status" value="2"/>
</dbReference>
<dbReference type="Gene3D" id="2.10.70.80">
    <property type="match status" value="2"/>
</dbReference>
<dbReference type="Gene3D" id="3.30.60.270">
    <property type="match status" value="2"/>
</dbReference>
<dbReference type="Gene3D" id="2.130.10.10">
    <property type="entry name" value="YVTN repeat-like/Quinoprotein amine dehydrogenase"/>
    <property type="match status" value="2"/>
</dbReference>
<dbReference type="InterPro" id="IPR031777">
    <property type="entry name" value="Sortilin_C"/>
</dbReference>
<dbReference type="InterPro" id="IPR031778">
    <property type="entry name" value="Sortilin_N"/>
</dbReference>
<dbReference type="InterPro" id="IPR006581">
    <property type="entry name" value="VPS10"/>
</dbReference>
<dbReference type="InterPro" id="IPR050310">
    <property type="entry name" value="VPS10-sortilin"/>
</dbReference>
<dbReference type="InterPro" id="IPR015943">
    <property type="entry name" value="WD40/YVTN_repeat-like_dom_sf"/>
</dbReference>
<dbReference type="PANTHER" id="PTHR12106">
    <property type="entry name" value="SORTILIN RELATED"/>
    <property type="match status" value="1"/>
</dbReference>
<dbReference type="PANTHER" id="PTHR12106:SF27">
    <property type="entry name" value="SORTILIN-RELATED RECEPTOR"/>
    <property type="match status" value="1"/>
</dbReference>
<dbReference type="Pfam" id="PF15902">
    <property type="entry name" value="Sortilin-Vps10"/>
    <property type="match status" value="2"/>
</dbReference>
<dbReference type="Pfam" id="PF15901">
    <property type="entry name" value="Sortilin_C"/>
    <property type="match status" value="2"/>
</dbReference>
<dbReference type="SMART" id="SM00602">
    <property type="entry name" value="VPS10"/>
    <property type="match status" value="2"/>
</dbReference>
<dbReference type="SUPFAM" id="SSF110296">
    <property type="entry name" value="Oligoxyloglucan reducing end-specific cellobiohydrolase"/>
    <property type="match status" value="3"/>
</dbReference>
<protein>
    <recommendedName>
        <fullName>Vacuolar protein sorting/targeting protein 10</fullName>
    </recommendedName>
    <alternativeName>
        <fullName>Carboxypeptidase Y receptor</fullName>
        <shortName>CPY receptor</shortName>
    </alternativeName>
    <alternativeName>
        <fullName>Sortilin vps10</fullName>
    </alternativeName>
    <alternativeName>
        <fullName>Vacuolar carboxypeptidase sorting receptor vps10</fullName>
    </alternativeName>
</protein>
<proteinExistence type="inferred from homology"/>
<evidence type="ECO:0000250" key="1"/>
<evidence type="ECO:0000255" key="2"/>
<evidence type="ECO:0000305" key="3"/>
<reference key="1">
    <citation type="journal article" date="2008" name="Nat. Biotechnol.">
        <title>Genome sequencing and analysis of the filamentous fungus Penicillium chrysogenum.</title>
        <authorList>
            <person name="van den Berg M.A."/>
            <person name="Albang R."/>
            <person name="Albermann K."/>
            <person name="Badger J.H."/>
            <person name="Daran J.-M."/>
            <person name="Driessen A.J.M."/>
            <person name="Garcia-Estrada C."/>
            <person name="Fedorova N.D."/>
            <person name="Harris D.M."/>
            <person name="Heijne W.H.M."/>
            <person name="Joardar V.S."/>
            <person name="Kiel J.A.K.W."/>
            <person name="Kovalchuk A."/>
            <person name="Martin J.F."/>
            <person name="Nierman W.C."/>
            <person name="Nijland J.G."/>
            <person name="Pronk J.T."/>
            <person name="Roubos J.A."/>
            <person name="van der Klei I.J."/>
            <person name="van Peij N.N.M.E."/>
            <person name="Veenhuis M."/>
            <person name="von Doehren H."/>
            <person name="Wagner C."/>
            <person name="Wortman J.R."/>
            <person name="Bovenberg R.A.L."/>
        </authorList>
    </citation>
    <scope>NUCLEOTIDE SEQUENCE [LARGE SCALE GENOMIC DNA]</scope>
    <source>
        <strain>ATCC 28089 / DSM 1075 / NRRL 1951 / Wisconsin 54-1255</strain>
    </source>
</reference>
<organism>
    <name type="scientific">Penicillium rubens (strain ATCC 28089 / DSM 1075 / NRRL 1951 / Wisconsin 54-1255)</name>
    <name type="common">Penicillium chrysogenum</name>
    <dbReference type="NCBI Taxonomy" id="500485"/>
    <lineage>
        <taxon>Eukaryota</taxon>
        <taxon>Fungi</taxon>
        <taxon>Dikarya</taxon>
        <taxon>Ascomycota</taxon>
        <taxon>Pezizomycotina</taxon>
        <taxon>Eurotiomycetes</taxon>
        <taxon>Eurotiomycetidae</taxon>
        <taxon>Eurotiales</taxon>
        <taxon>Aspergillaceae</taxon>
        <taxon>Penicillium</taxon>
        <taxon>Penicillium chrysogenum species complex</taxon>
    </lineage>
</organism>
<comment type="function">
    <text evidence="1">Functions as a sorting receptor in the Golgi compartment required for the intracellular sorting and delivery of soluble vacuolar proteins, like carboxypeptidase Y (CPY) and proteinase A. Executes multiple rounds of sorting by cycling between the late Golgi and a prevacuolar endosome-like compartment (By similarity).</text>
</comment>
<comment type="subcellular location">
    <subcellularLocation>
        <location evidence="1">Golgi apparatus</location>
        <location evidence="1">trans-Golgi network membrane</location>
        <topology evidence="1">Multi-pass membrane protein</topology>
    </subcellularLocation>
    <subcellularLocation>
        <location evidence="1">Prevacuolar compartment membrane</location>
        <topology evidence="1">Multi-pass membrane protein</topology>
    </subcellularLocation>
    <text evidence="1">Cycles between the Golgi apparatus and the prevacuolar compartment.</text>
</comment>
<comment type="similarity">
    <text evidence="3">Belongs to the VPS10-related sortilin family.</text>
</comment>